<name>KPYK_DEBHA</name>
<keyword id="KW-0067">ATP-binding</keyword>
<keyword id="KW-0324">Glycolysis</keyword>
<keyword id="KW-0418">Kinase</keyword>
<keyword id="KW-0460">Magnesium</keyword>
<keyword id="KW-0479">Metal-binding</keyword>
<keyword id="KW-0547">Nucleotide-binding</keyword>
<keyword id="KW-0630">Potassium</keyword>
<keyword id="KW-0670">Pyruvate</keyword>
<keyword id="KW-1185">Reference proteome</keyword>
<keyword id="KW-0808">Transferase</keyword>
<comment type="catalytic activity">
    <reaction>
        <text>pyruvate + ATP = phosphoenolpyruvate + ADP + H(+)</text>
        <dbReference type="Rhea" id="RHEA:18157"/>
        <dbReference type="ChEBI" id="CHEBI:15361"/>
        <dbReference type="ChEBI" id="CHEBI:15378"/>
        <dbReference type="ChEBI" id="CHEBI:30616"/>
        <dbReference type="ChEBI" id="CHEBI:58702"/>
        <dbReference type="ChEBI" id="CHEBI:456216"/>
        <dbReference type="EC" id="2.7.1.40"/>
    </reaction>
</comment>
<comment type="cofactor">
    <cofactor evidence="1">
        <name>Mg(2+)</name>
        <dbReference type="ChEBI" id="CHEBI:18420"/>
    </cofactor>
</comment>
<comment type="cofactor">
    <cofactor evidence="1">
        <name>K(+)</name>
        <dbReference type="ChEBI" id="CHEBI:29103"/>
    </cofactor>
</comment>
<comment type="pathway">
    <text>Carbohydrate degradation; glycolysis; pyruvate from D-glyceraldehyde 3-phosphate: step 5/5.</text>
</comment>
<comment type="subunit">
    <text evidence="1">Homotetramer.</text>
</comment>
<comment type="similarity">
    <text evidence="4">Belongs to the pyruvate kinase family.</text>
</comment>
<organism>
    <name type="scientific">Debaryomyces hansenii (strain ATCC 36239 / CBS 767 / BCRC 21394 / JCM 1990 / NBRC 0083 / IGC 2968)</name>
    <name type="common">Yeast</name>
    <name type="synonym">Torulaspora hansenii</name>
    <dbReference type="NCBI Taxonomy" id="284592"/>
    <lineage>
        <taxon>Eukaryota</taxon>
        <taxon>Fungi</taxon>
        <taxon>Dikarya</taxon>
        <taxon>Ascomycota</taxon>
        <taxon>Saccharomycotina</taxon>
        <taxon>Pichiomycetes</taxon>
        <taxon>Debaryomycetaceae</taxon>
        <taxon>Debaryomyces</taxon>
    </lineage>
</organism>
<dbReference type="EC" id="2.7.1.40"/>
<dbReference type="EMBL" id="CR382136">
    <property type="protein sequence ID" value="CAG87106.1"/>
    <property type="molecule type" value="Genomic_DNA"/>
</dbReference>
<dbReference type="RefSeq" id="XP_458945.1">
    <property type="nucleotide sequence ID" value="XM_458945.1"/>
</dbReference>
<dbReference type="SMR" id="Q6BS75"/>
<dbReference type="FunCoup" id="Q6BS75">
    <property type="interactions" value="986"/>
</dbReference>
<dbReference type="STRING" id="284592.Q6BS75"/>
<dbReference type="GeneID" id="2901740"/>
<dbReference type="KEGG" id="dha:DEHA2D11044g"/>
<dbReference type="VEuPathDB" id="FungiDB:DEHA2D11044g"/>
<dbReference type="eggNOG" id="KOG2323">
    <property type="taxonomic scope" value="Eukaryota"/>
</dbReference>
<dbReference type="HOGENOM" id="CLU_015439_0_1_1"/>
<dbReference type="InParanoid" id="Q6BS75"/>
<dbReference type="OMA" id="RVHHIGE"/>
<dbReference type="OrthoDB" id="108365at2759"/>
<dbReference type="UniPathway" id="UPA00109">
    <property type="reaction ID" value="UER00188"/>
</dbReference>
<dbReference type="Proteomes" id="UP000000599">
    <property type="component" value="Chromosome D"/>
</dbReference>
<dbReference type="GO" id="GO:0005524">
    <property type="term" value="F:ATP binding"/>
    <property type="evidence" value="ECO:0007669"/>
    <property type="project" value="UniProtKB-KW"/>
</dbReference>
<dbReference type="GO" id="GO:0016301">
    <property type="term" value="F:kinase activity"/>
    <property type="evidence" value="ECO:0007669"/>
    <property type="project" value="UniProtKB-KW"/>
</dbReference>
<dbReference type="GO" id="GO:0000287">
    <property type="term" value="F:magnesium ion binding"/>
    <property type="evidence" value="ECO:0007669"/>
    <property type="project" value="InterPro"/>
</dbReference>
<dbReference type="GO" id="GO:0030955">
    <property type="term" value="F:potassium ion binding"/>
    <property type="evidence" value="ECO:0007669"/>
    <property type="project" value="InterPro"/>
</dbReference>
<dbReference type="GO" id="GO:0004743">
    <property type="term" value="F:pyruvate kinase activity"/>
    <property type="evidence" value="ECO:0007669"/>
    <property type="project" value="UniProtKB-EC"/>
</dbReference>
<dbReference type="CDD" id="cd00288">
    <property type="entry name" value="Pyruvate_Kinase"/>
    <property type="match status" value="1"/>
</dbReference>
<dbReference type="FunFam" id="2.40.33.10:FF:000001">
    <property type="entry name" value="Pyruvate kinase"/>
    <property type="match status" value="1"/>
</dbReference>
<dbReference type="FunFam" id="3.20.20.60:FF:000001">
    <property type="entry name" value="Pyruvate kinase"/>
    <property type="match status" value="1"/>
</dbReference>
<dbReference type="FunFam" id="3.40.1380.20:FF:000001">
    <property type="entry name" value="Pyruvate kinase"/>
    <property type="match status" value="1"/>
</dbReference>
<dbReference type="Gene3D" id="3.20.20.60">
    <property type="entry name" value="Phosphoenolpyruvate-binding domains"/>
    <property type="match status" value="1"/>
</dbReference>
<dbReference type="Gene3D" id="2.40.33.10">
    <property type="entry name" value="PK beta-barrel domain-like"/>
    <property type="match status" value="1"/>
</dbReference>
<dbReference type="Gene3D" id="3.40.1380.20">
    <property type="entry name" value="Pyruvate kinase, C-terminal domain"/>
    <property type="match status" value="1"/>
</dbReference>
<dbReference type="InterPro" id="IPR001697">
    <property type="entry name" value="Pyr_Knase"/>
</dbReference>
<dbReference type="InterPro" id="IPR015813">
    <property type="entry name" value="Pyrv/PenolPyrv_kinase-like_dom"/>
</dbReference>
<dbReference type="InterPro" id="IPR040442">
    <property type="entry name" value="Pyrv_kinase-like_dom_sf"/>
</dbReference>
<dbReference type="InterPro" id="IPR011037">
    <property type="entry name" value="Pyrv_Knase-like_insert_dom_sf"/>
</dbReference>
<dbReference type="InterPro" id="IPR018209">
    <property type="entry name" value="Pyrv_Knase_AS"/>
</dbReference>
<dbReference type="InterPro" id="IPR015793">
    <property type="entry name" value="Pyrv_Knase_brl"/>
</dbReference>
<dbReference type="InterPro" id="IPR015795">
    <property type="entry name" value="Pyrv_Knase_C"/>
</dbReference>
<dbReference type="InterPro" id="IPR036918">
    <property type="entry name" value="Pyrv_Knase_C_sf"/>
</dbReference>
<dbReference type="InterPro" id="IPR015806">
    <property type="entry name" value="Pyrv_Knase_insert_dom_sf"/>
</dbReference>
<dbReference type="NCBIfam" id="NF004491">
    <property type="entry name" value="PRK05826.1"/>
    <property type="match status" value="1"/>
</dbReference>
<dbReference type="NCBIfam" id="NF004978">
    <property type="entry name" value="PRK06354.1"/>
    <property type="match status" value="1"/>
</dbReference>
<dbReference type="NCBIfam" id="TIGR01064">
    <property type="entry name" value="pyruv_kin"/>
    <property type="match status" value="1"/>
</dbReference>
<dbReference type="PANTHER" id="PTHR11817">
    <property type="entry name" value="PYRUVATE KINASE"/>
    <property type="match status" value="1"/>
</dbReference>
<dbReference type="Pfam" id="PF00224">
    <property type="entry name" value="PK"/>
    <property type="match status" value="1"/>
</dbReference>
<dbReference type="Pfam" id="PF02887">
    <property type="entry name" value="PK_C"/>
    <property type="match status" value="1"/>
</dbReference>
<dbReference type="PRINTS" id="PR01050">
    <property type="entry name" value="PYRUVTKNASE"/>
</dbReference>
<dbReference type="SUPFAM" id="SSF51621">
    <property type="entry name" value="Phosphoenolpyruvate/pyruvate domain"/>
    <property type="match status" value="1"/>
</dbReference>
<dbReference type="SUPFAM" id="SSF50800">
    <property type="entry name" value="PK beta-barrel domain-like"/>
    <property type="match status" value="1"/>
</dbReference>
<dbReference type="SUPFAM" id="SSF52935">
    <property type="entry name" value="PK C-terminal domain-like"/>
    <property type="match status" value="1"/>
</dbReference>
<dbReference type="PROSITE" id="PS00110">
    <property type="entry name" value="PYRUVATE_KINASE"/>
    <property type="match status" value="1"/>
</dbReference>
<protein>
    <recommendedName>
        <fullName>Pyruvate kinase</fullName>
        <shortName>PK</shortName>
        <ecNumber>2.7.1.40</ecNumber>
    </recommendedName>
</protein>
<reference key="1">
    <citation type="journal article" date="2004" name="Nature">
        <title>Genome evolution in yeasts.</title>
        <authorList>
            <person name="Dujon B."/>
            <person name="Sherman D."/>
            <person name="Fischer G."/>
            <person name="Durrens P."/>
            <person name="Casaregola S."/>
            <person name="Lafontaine I."/>
            <person name="de Montigny J."/>
            <person name="Marck C."/>
            <person name="Neuveglise C."/>
            <person name="Talla E."/>
            <person name="Goffard N."/>
            <person name="Frangeul L."/>
            <person name="Aigle M."/>
            <person name="Anthouard V."/>
            <person name="Babour A."/>
            <person name="Barbe V."/>
            <person name="Barnay S."/>
            <person name="Blanchin S."/>
            <person name="Beckerich J.-M."/>
            <person name="Beyne E."/>
            <person name="Bleykasten C."/>
            <person name="Boisrame A."/>
            <person name="Boyer J."/>
            <person name="Cattolico L."/>
            <person name="Confanioleri F."/>
            <person name="de Daruvar A."/>
            <person name="Despons L."/>
            <person name="Fabre E."/>
            <person name="Fairhead C."/>
            <person name="Ferry-Dumazet H."/>
            <person name="Groppi A."/>
            <person name="Hantraye F."/>
            <person name="Hennequin C."/>
            <person name="Jauniaux N."/>
            <person name="Joyet P."/>
            <person name="Kachouri R."/>
            <person name="Kerrest A."/>
            <person name="Koszul R."/>
            <person name="Lemaire M."/>
            <person name="Lesur I."/>
            <person name="Ma L."/>
            <person name="Muller H."/>
            <person name="Nicaud J.-M."/>
            <person name="Nikolski M."/>
            <person name="Oztas S."/>
            <person name="Ozier-Kalogeropoulos O."/>
            <person name="Pellenz S."/>
            <person name="Potier S."/>
            <person name="Richard G.-F."/>
            <person name="Straub M.-L."/>
            <person name="Suleau A."/>
            <person name="Swennen D."/>
            <person name="Tekaia F."/>
            <person name="Wesolowski-Louvel M."/>
            <person name="Westhof E."/>
            <person name="Wirth B."/>
            <person name="Zeniou-Meyer M."/>
            <person name="Zivanovic Y."/>
            <person name="Bolotin-Fukuhara M."/>
            <person name="Thierry A."/>
            <person name="Bouchier C."/>
            <person name="Caudron B."/>
            <person name="Scarpelli C."/>
            <person name="Gaillardin C."/>
            <person name="Weissenbach J."/>
            <person name="Wincker P."/>
            <person name="Souciet J.-L."/>
        </authorList>
    </citation>
    <scope>NUCLEOTIDE SEQUENCE [LARGE SCALE GENOMIC DNA]</scope>
    <source>
        <strain>ATCC 36239 / CBS 767 / BCRC 21394 / JCM 1990 / NBRC 0083 / IGC 2968</strain>
    </source>
</reference>
<accession>Q6BS75</accession>
<feature type="chain" id="PRO_0000112112" description="Pyruvate kinase">
    <location>
        <begin position="1"/>
        <end position="504"/>
    </location>
</feature>
<feature type="binding site" evidence="1">
    <location>
        <position position="53"/>
    </location>
    <ligand>
        <name>substrate</name>
    </ligand>
</feature>
<feature type="binding site" evidence="2">
    <location>
        <begin position="55"/>
        <end position="58"/>
    </location>
    <ligand>
        <name>ATP</name>
        <dbReference type="ChEBI" id="CHEBI:30616"/>
    </ligand>
</feature>
<feature type="binding site" evidence="1">
    <location>
        <position position="55"/>
    </location>
    <ligand>
        <name>K(+)</name>
        <dbReference type="ChEBI" id="CHEBI:29103"/>
    </ligand>
</feature>
<feature type="binding site" evidence="1">
    <location>
        <position position="57"/>
    </location>
    <ligand>
        <name>K(+)</name>
        <dbReference type="ChEBI" id="CHEBI:29103"/>
    </ligand>
</feature>
<feature type="binding site" evidence="1">
    <location>
        <position position="88"/>
    </location>
    <ligand>
        <name>K(+)</name>
        <dbReference type="ChEBI" id="CHEBI:29103"/>
    </ligand>
</feature>
<feature type="binding site" evidence="1">
    <location>
        <position position="89"/>
    </location>
    <ligand>
        <name>K(+)</name>
        <dbReference type="ChEBI" id="CHEBI:29103"/>
    </ligand>
</feature>
<feature type="binding site" evidence="2">
    <location>
        <position position="95"/>
    </location>
    <ligand>
        <name>ATP</name>
        <dbReference type="ChEBI" id="CHEBI:30616"/>
    </ligand>
</feature>
<feature type="binding site" evidence="2">
    <location>
        <position position="181"/>
    </location>
    <ligand>
        <name>ATP</name>
        <dbReference type="ChEBI" id="CHEBI:30616"/>
    </ligand>
</feature>
<feature type="binding site" evidence="3">
    <location>
        <position position="246"/>
    </location>
    <ligand>
        <name>Mg(2+)</name>
        <dbReference type="ChEBI" id="CHEBI:18420"/>
    </ligand>
</feature>
<feature type="binding site" evidence="1">
    <location>
        <position position="269"/>
    </location>
    <ligand>
        <name>substrate</name>
    </ligand>
</feature>
<feature type="binding site" evidence="1">
    <location>
        <position position="270"/>
    </location>
    <ligand>
        <name>Mg(2+)</name>
        <dbReference type="ChEBI" id="CHEBI:18420"/>
    </ligand>
</feature>
<feature type="binding site" evidence="1">
    <location>
        <position position="270"/>
    </location>
    <ligand>
        <name>substrate</name>
    </ligand>
</feature>
<feature type="binding site" evidence="1">
    <location>
        <position position="302"/>
    </location>
    <ligand>
        <name>substrate</name>
    </ligand>
</feature>
<feature type="site" description="Transition state stabilizer" evidence="1">
    <location>
        <position position="244"/>
    </location>
</feature>
<proteinExistence type="inferred from homology"/>
<evidence type="ECO:0000250" key="1"/>
<evidence type="ECO:0000250" key="2">
    <source>
        <dbReference type="UniProtKB" id="P14618"/>
    </source>
</evidence>
<evidence type="ECO:0000255" key="3"/>
<evidence type="ECO:0000305" key="4"/>
<gene>
    <name type="primary">PYK1</name>
    <name type="ordered locus">DEHA2D11044g</name>
</gene>
<sequence length="504" mass="55714">MSNASLSWLTKLNTSETPDKVLRRSSIIGTIGPKTNNVDVLVKLRKAGLNIVRMNFSHGSYEYHQSVIDNAKQSEEIYKGRPLAIALDTKGPEIRTGTTIDDKDYPILPNHEMIFTTDEAYAKKCDDKVMFIDYKNITKVIEAGKIIYIDDGVVSFEVLQIVDDKTLKVRSVNSGKICSHKGVNLPGTDVDLPALSEKDKADIKFGVKNGVHMIFASFIRTGDDIKEIRKVLGEEGKDIQIIAKIENQQGVNNFDEILVETDGVMVARGDLGIEIPAPQVFVVQKQLIAKCNLAAKPVICATQMLESMTYNPRPTRAEVSDVGNAILDGADCVMLSGETAKGNYPFEAVSMMHNTAIIAEKAIAYQPLHNEIRSLANRPTPTTETCAMASVSAAYEQDAKAIVVLSTSGFTSRLVSKYKPNVPVMMVTRNHRAARYCHLYRGVYPFVYEKKTVDNWQEDVENRLRWAVSEAIDLGIIKKGDSIVTIQGWTRGSGHSNTVRVVQA</sequence>